<evidence type="ECO:0000255" key="1">
    <source>
        <dbReference type="HAMAP-Rule" id="MF_00013"/>
    </source>
</evidence>
<evidence type="ECO:0000255" key="2">
    <source>
        <dbReference type="PROSITE-ProRule" id="PRU01067"/>
    </source>
</evidence>
<feature type="chain" id="PRO_1000001139" description="Octanoyltransferase">
    <location>
        <begin position="1"/>
        <end position="223"/>
    </location>
</feature>
<feature type="domain" description="BPL/LPL catalytic" evidence="2">
    <location>
        <begin position="35"/>
        <end position="214"/>
    </location>
</feature>
<feature type="active site" description="Acyl-thioester intermediate" evidence="1">
    <location>
        <position position="176"/>
    </location>
</feature>
<feature type="binding site" evidence="1">
    <location>
        <begin position="74"/>
        <end position="81"/>
    </location>
    <ligand>
        <name>substrate</name>
    </ligand>
</feature>
<feature type="binding site" evidence="1">
    <location>
        <begin position="145"/>
        <end position="147"/>
    </location>
    <ligand>
        <name>substrate</name>
    </ligand>
</feature>
<feature type="binding site" evidence="1">
    <location>
        <begin position="158"/>
        <end position="160"/>
    </location>
    <ligand>
        <name>substrate</name>
    </ligand>
</feature>
<feature type="site" description="Lowers pKa of active site Cys" evidence="1">
    <location>
        <position position="142"/>
    </location>
</feature>
<organism>
    <name type="scientific">Rhizorhabdus wittichii (strain DSM 6014 / CCUG 31198 / JCM 15750 / NBRC 105917 / EY 4224 / RW1)</name>
    <name type="common">Sphingomonas wittichii</name>
    <dbReference type="NCBI Taxonomy" id="392499"/>
    <lineage>
        <taxon>Bacteria</taxon>
        <taxon>Pseudomonadati</taxon>
        <taxon>Pseudomonadota</taxon>
        <taxon>Alphaproteobacteria</taxon>
        <taxon>Sphingomonadales</taxon>
        <taxon>Sphingomonadaceae</taxon>
        <taxon>Rhizorhabdus</taxon>
    </lineage>
</organism>
<keyword id="KW-0012">Acyltransferase</keyword>
<keyword id="KW-0963">Cytoplasm</keyword>
<keyword id="KW-1185">Reference proteome</keyword>
<keyword id="KW-0808">Transferase</keyword>
<reference key="1">
    <citation type="journal article" date="2010" name="J. Bacteriol.">
        <title>Genome sequence of the dioxin-mineralizing bacterium Sphingomonas wittichii RW1.</title>
        <authorList>
            <person name="Miller T.R."/>
            <person name="Delcher A.L."/>
            <person name="Salzberg S.L."/>
            <person name="Saunders E."/>
            <person name="Detter J.C."/>
            <person name="Halden R.U."/>
        </authorList>
    </citation>
    <scope>NUCLEOTIDE SEQUENCE [LARGE SCALE GENOMIC DNA]</scope>
    <source>
        <strain>DSM 6014 / CCUG 31198 / JCM 15750 / NBRC 105917 / EY 4224 / RW1</strain>
    </source>
</reference>
<name>LIPB_RHIWR</name>
<protein>
    <recommendedName>
        <fullName evidence="1">Octanoyltransferase</fullName>
        <ecNumber evidence="1">2.3.1.181</ecNumber>
    </recommendedName>
    <alternativeName>
        <fullName evidence="1">Lipoate-protein ligase B</fullName>
    </alternativeName>
    <alternativeName>
        <fullName evidence="1">Lipoyl/octanoyl transferase</fullName>
    </alternativeName>
    <alternativeName>
        <fullName evidence="1">Octanoyl-[acyl-carrier-protein]-protein N-octanoyltransferase</fullName>
    </alternativeName>
</protein>
<proteinExistence type="inferred from homology"/>
<gene>
    <name evidence="1" type="primary">lipB</name>
    <name type="ordered locus">Swit_1401</name>
</gene>
<sequence length="223" mass="24290">MTVDDDIEWRVTPGLSPYAETVAEMEARAAAIRAGEARELIWLLEHPPLYTAGTSAEADELLLPDRFPVFRSGRGGRYTYHGPGQRVGYVLLDLDRRGRDVRCFVAAIENWVIATLGDFGIAGRSEPGRVGIWTGHGPDEAKIGAIGVRVRRWVSFHGFSLNVDPDLSHFSGIVPCGLGEFAVTSMARLGIPAEMAAVDAALRRHFPAMLAGLRCSTRSDKDS</sequence>
<accession>A5V649</accession>
<comment type="function">
    <text evidence="1">Catalyzes the transfer of endogenously produced octanoic acid from octanoyl-acyl-carrier-protein onto the lipoyl domains of lipoate-dependent enzymes. Lipoyl-ACP can also act as a substrate although octanoyl-ACP is likely to be the physiological substrate.</text>
</comment>
<comment type="catalytic activity">
    <reaction evidence="1">
        <text>octanoyl-[ACP] + L-lysyl-[protein] = N(6)-octanoyl-L-lysyl-[protein] + holo-[ACP] + H(+)</text>
        <dbReference type="Rhea" id="RHEA:17665"/>
        <dbReference type="Rhea" id="RHEA-COMP:9636"/>
        <dbReference type="Rhea" id="RHEA-COMP:9685"/>
        <dbReference type="Rhea" id="RHEA-COMP:9752"/>
        <dbReference type="Rhea" id="RHEA-COMP:9928"/>
        <dbReference type="ChEBI" id="CHEBI:15378"/>
        <dbReference type="ChEBI" id="CHEBI:29969"/>
        <dbReference type="ChEBI" id="CHEBI:64479"/>
        <dbReference type="ChEBI" id="CHEBI:78463"/>
        <dbReference type="ChEBI" id="CHEBI:78809"/>
        <dbReference type="EC" id="2.3.1.181"/>
    </reaction>
</comment>
<comment type="pathway">
    <text evidence="1">Protein modification; protein lipoylation via endogenous pathway; protein N(6)-(lipoyl)lysine from octanoyl-[acyl-carrier-protein]: step 1/2.</text>
</comment>
<comment type="subcellular location">
    <subcellularLocation>
        <location evidence="1">Cytoplasm</location>
    </subcellularLocation>
</comment>
<comment type="miscellaneous">
    <text evidence="1">In the reaction, the free carboxyl group of octanoic acid is attached via an amide linkage to the epsilon-amino group of a specific lysine residue of lipoyl domains of lipoate-dependent enzymes.</text>
</comment>
<comment type="similarity">
    <text evidence="1">Belongs to the LipB family.</text>
</comment>
<dbReference type="EC" id="2.3.1.181" evidence="1"/>
<dbReference type="EMBL" id="CP000699">
    <property type="protein sequence ID" value="ABQ67765.1"/>
    <property type="molecule type" value="Genomic_DNA"/>
</dbReference>
<dbReference type="SMR" id="A5V649"/>
<dbReference type="STRING" id="392499.Swit_1401"/>
<dbReference type="PaxDb" id="392499-Swit_1401"/>
<dbReference type="KEGG" id="swi:Swit_1401"/>
<dbReference type="eggNOG" id="COG0321">
    <property type="taxonomic scope" value="Bacteria"/>
</dbReference>
<dbReference type="HOGENOM" id="CLU_035168_3_0_5"/>
<dbReference type="OrthoDB" id="9787061at2"/>
<dbReference type="UniPathway" id="UPA00538">
    <property type="reaction ID" value="UER00592"/>
</dbReference>
<dbReference type="Proteomes" id="UP000001989">
    <property type="component" value="Chromosome"/>
</dbReference>
<dbReference type="GO" id="GO:0005737">
    <property type="term" value="C:cytoplasm"/>
    <property type="evidence" value="ECO:0007669"/>
    <property type="project" value="UniProtKB-SubCell"/>
</dbReference>
<dbReference type="GO" id="GO:0033819">
    <property type="term" value="F:lipoyl(octanoyl) transferase activity"/>
    <property type="evidence" value="ECO:0007669"/>
    <property type="project" value="UniProtKB-EC"/>
</dbReference>
<dbReference type="GO" id="GO:0036211">
    <property type="term" value="P:protein modification process"/>
    <property type="evidence" value="ECO:0007669"/>
    <property type="project" value="InterPro"/>
</dbReference>
<dbReference type="CDD" id="cd16444">
    <property type="entry name" value="LipB"/>
    <property type="match status" value="1"/>
</dbReference>
<dbReference type="Gene3D" id="3.30.930.10">
    <property type="entry name" value="Bira Bifunctional Protein, Domain 2"/>
    <property type="match status" value="1"/>
</dbReference>
<dbReference type="HAMAP" id="MF_00013">
    <property type="entry name" value="LipB"/>
    <property type="match status" value="1"/>
</dbReference>
<dbReference type="InterPro" id="IPR045864">
    <property type="entry name" value="aa-tRNA-synth_II/BPL/LPL"/>
</dbReference>
<dbReference type="InterPro" id="IPR004143">
    <property type="entry name" value="BPL_LPL_catalytic"/>
</dbReference>
<dbReference type="InterPro" id="IPR000544">
    <property type="entry name" value="Octanoyltransferase"/>
</dbReference>
<dbReference type="InterPro" id="IPR020605">
    <property type="entry name" value="Octanoyltransferase_CS"/>
</dbReference>
<dbReference type="NCBIfam" id="TIGR00214">
    <property type="entry name" value="lipB"/>
    <property type="match status" value="1"/>
</dbReference>
<dbReference type="NCBIfam" id="NF010921">
    <property type="entry name" value="PRK14341.1"/>
    <property type="match status" value="1"/>
</dbReference>
<dbReference type="PANTHER" id="PTHR10993:SF7">
    <property type="entry name" value="LIPOYLTRANSFERASE 2, MITOCHONDRIAL-RELATED"/>
    <property type="match status" value="1"/>
</dbReference>
<dbReference type="PANTHER" id="PTHR10993">
    <property type="entry name" value="OCTANOYLTRANSFERASE"/>
    <property type="match status" value="1"/>
</dbReference>
<dbReference type="Pfam" id="PF21948">
    <property type="entry name" value="LplA-B_cat"/>
    <property type="match status" value="1"/>
</dbReference>
<dbReference type="PIRSF" id="PIRSF016262">
    <property type="entry name" value="LPLase"/>
    <property type="match status" value="1"/>
</dbReference>
<dbReference type="SUPFAM" id="SSF55681">
    <property type="entry name" value="Class II aaRS and biotin synthetases"/>
    <property type="match status" value="1"/>
</dbReference>
<dbReference type="PROSITE" id="PS51733">
    <property type="entry name" value="BPL_LPL_CATALYTIC"/>
    <property type="match status" value="1"/>
</dbReference>
<dbReference type="PROSITE" id="PS01313">
    <property type="entry name" value="LIPB"/>
    <property type="match status" value="1"/>
</dbReference>